<comment type="function">
    <text evidence="1">Involved in mRNA degradation. Catalyzes the phosphorolysis of single-stranded polyribonucleotides processively in the 3'- to 5'-direction.</text>
</comment>
<comment type="catalytic activity">
    <reaction evidence="1">
        <text>RNA(n+1) + phosphate = RNA(n) + a ribonucleoside 5'-diphosphate</text>
        <dbReference type="Rhea" id="RHEA:22096"/>
        <dbReference type="Rhea" id="RHEA-COMP:14527"/>
        <dbReference type="Rhea" id="RHEA-COMP:17342"/>
        <dbReference type="ChEBI" id="CHEBI:43474"/>
        <dbReference type="ChEBI" id="CHEBI:57930"/>
        <dbReference type="ChEBI" id="CHEBI:140395"/>
        <dbReference type="EC" id="2.7.7.8"/>
    </reaction>
</comment>
<comment type="cofactor">
    <cofactor evidence="1">
        <name>Mg(2+)</name>
        <dbReference type="ChEBI" id="CHEBI:18420"/>
    </cofactor>
</comment>
<comment type="subunit">
    <text evidence="1">Component of the RNA degradosome, which is a multiprotein complex involved in RNA processing and mRNA degradation.</text>
</comment>
<comment type="subcellular location">
    <subcellularLocation>
        <location evidence="1">Cytoplasm</location>
    </subcellularLocation>
</comment>
<comment type="similarity">
    <text evidence="1">Belongs to the polyribonucleotide nucleotidyltransferase family.</text>
</comment>
<evidence type="ECO:0000255" key="1">
    <source>
        <dbReference type="HAMAP-Rule" id="MF_01595"/>
    </source>
</evidence>
<evidence type="ECO:0000256" key="2">
    <source>
        <dbReference type="SAM" id="MobiDB-lite"/>
    </source>
</evidence>
<feature type="chain" id="PRO_0000329930" description="Polyribonucleotide nucleotidyltransferase">
    <location>
        <begin position="1"/>
        <end position="710"/>
    </location>
</feature>
<feature type="domain" description="KH" evidence="1">
    <location>
        <begin position="554"/>
        <end position="613"/>
    </location>
</feature>
<feature type="domain" description="S1 motif" evidence="1">
    <location>
        <begin position="623"/>
        <end position="691"/>
    </location>
</feature>
<feature type="region of interest" description="Disordered" evidence="2">
    <location>
        <begin position="691"/>
        <end position="710"/>
    </location>
</feature>
<feature type="binding site" evidence="1">
    <location>
        <position position="487"/>
    </location>
    <ligand>
        <name>Mg(2+)</name>
        <dbReference type="ChEBI" id="CHEBI:18420"/>
    </ligand>
</feature>
<feature type="binding site" evidence="1">
    <location>
        <position position="493"/>
    </location>
    <ligand>
        <name>Mg(2+)</name>
        <dbReference type="ChEBI" id="CHEBI:18420"/>
    </ligand>
</feature>
<protein>
    <recommendedName>
        <fullName evidence="1">Polyribonucleotide nucleotidyltransferase</fullName>
        <ecNumber evidence="1">2.7.7.8</ecNumber>
    </recommendedName>
    <alternativeName>
        <fullName evidence="1">Polynucleotide phosphorylase</fullName>
        <shortName evidence="1">PNPase</shortName>
    </alternativeName>
</protein>
<organism>
    <name type="scientific">Vibrio campbellii (strain ATCC BAA-1116)</name>
    <dbReference type="NCBI Taxonomy" id="2902295"/>
    <lineage>
        <taxon>Bacteria</taxon>
        <taxon>Pseudomonadati</taxon>
        <taxon>Pseudomonadota</taxon>
        <taxon>Gammaproteobacteria</taxon>
        <taxon>Vibrionales</taxon>
        <taxon>Vibrionaceae</taxon>
        <taxon>Vibrio</taxon>
    </lineage>
</organism>
<keyword id="KW-0963">Cytoplasm</keyword>
<keyword id="KW-0460">Magnesium</keyword>
<keyword id="KW-0479">Metal-binding</keyword>
<keyword id="KW-0548">Nucleotidyltransferase</keyword>
<keyword id="KW-0694">RNA-binding</keyword>
<keyword id="KW-0808">Transferase</keyword>
<reference key="1">
    <citation type="submission" date="2007-08" db="EMBL/GenBank/DDBJ databases">
        <authorList>
            <consortium name="The Vibrio harveyi Genome Sequencing Project"/>
            <person name="Bassler B."/>
            <person name="Clifton S.W."/>
            <person name="Fulton L."/>
            <person name="Delehaunty K."/>
            <person name="Fronick C."/>
            <person name="Harrison M."/>
            <person name="Markivic C."/>
            <person name="Fulton R."/>
            <person name="Tin-Wollam A.-M."/>
            <person name="Shah N."/>
            <person name="Pepin K."/>
            <person name="Nash W."/>
            <person name="Thiruvilangam P."/>
            <person name="Bhonagiri V."/>
            <person name="Waters C."/>
            <person name="Tu K.C."/>
            <person name="Irgon J."/>
            <person name="Wilson R.K."/>
        </authorList>
    </citation>
    <scope>NUCLEOTIDE SEQUENCE [LARGE SCALE GENOMIC DNA]</scope>
    <source>
        <strain>ATCC BAA-1116 / BB120</strain>
    </source>
</reference>
<accession>A7MZI2</accession>
<name>PNP_VIBC1</name>
<gene>
    <name evidence="1" type="primary">pnp</name>
    <name type="ordered locus">VIBHAR_03393</name>
</gene>
<dbReference type="EC" id="2.7.7.8" evidence="1"/>
<dbReference type="EMBL" id="CP000789">
    <property type="protein sequence ID" value="ABU72340.1"/>
    <property type="molecule type" value="Genomic_DNA"/>
</dbReference>
<dbReference type="RefSeq" id="WP_012128820.1">
    <property type="nucleotide sequence ID" value="NC_022269.1"/>
</dbReference>
<dbReference type="SMR" id="A7MZI2"/>
<dbReference type="KEGG" id="vha:VIBHAR_03393"/>
<dbReference type="PATRIC" id="fig|338187.25.peg.2804"/>
<dbReference type="Proteomes" id="UP000008152">
    <property type="component" value="Chromosome I"/>
</dbReference>
<dbReference type="GO" id="GO:0005829">
    <property type="term" value="C:cytosol"/>
    <property type="evidence" value="ECO:0007669"/>
    <property type="project" value="TreeGrafter"/>
</dbReference>
<dbReference type="GO" id="GO:0000175">
    <property type="term" value="F:3'-5'-RNA exonuclease activity"/>
    <property type="evidence" value="ECO:0007669"/>
    <property type="project" value="TreeGrafter"/>
</dbReference>
<dbReference type="GO" id="GO:0000287">
    <property type="term" value="F:magnesium ion binding"/>
    <property type="evidence" value="ECO:0007669"/>
    <property type="project" value="UniProtKB-UniRule"/>
</dbReference>
<dbReference type="GO" id="GO:0004654">
    <property type="term" value="F:polyribonucleotide nucleotidyltransferase activity"/>
    <property type="evidence" value="ECO:0007669"/>
    <property type="project" value="UniProtKB-UniRule"/>
</dbReference>
<dbReference type="GO" id="GO:0003723">
    <property type="term" value="F:RNA binding"/>
    <property type="evidence" value="ECO:0007669"/>
    <property type="project" value="UniProtKB-UniRule"/>
</dbReference>
<dbReference type="GO" id="GO:0006402">
    <property type="term" value="P:mRNA catabolic process"/>
    <property type="evidence" value="ECO:0007669"/>
    <property type="project" value="UniProtKB-UniRule"/>
</dbReference>
<dbReference type="GO" id="GO:0006396">
    <property type="term" value="P:RNA processing"/>
    <property type="evidence" value="ECO:0007669"/>
    <property type="project" value="InterPro"/>
</dbReference>
<dbReference type="CDD" id="cd02393">
    <property type="entry name" value="KH-I_PNPase"/>
    <property type="match status" value="1"/>
</dbReference>
<dbReference type="CDD" id="cd11363">
    <property type="entry name" value="RNase_PH_PNPase_1"/>
    <property type="match status" value="1"/>
</dbReference>
<dbReference type="CDD" id="cd11364">
    <property type="entry name" value="RNase_PH_PNPase_2"/>
    <property type="match status" value="1"/>
</dbReference>
<dbReference type="CDD" id="cd04472">
    <property type="entry name" value="S1_PNPase"/>
    <property type="match status" value="1"/>
</dbReference>
<dbReference type="FunFam" id="2.40.50.140:FF:000023">
    <property type="entry name" value="Polyribonucleotide nucleotidyltransferase"/>
    <property type="match status" value="1"/>
</dbReference>
<dbReference type="FunFam" id="3.30.1370.10:FF:000001">
    <property type="entry name" value="Polyribonucleotide nucleotidyltransferase"/>
    <property type="match status" value="1"/>
</dbReference>
<dbReference type="FunFam" id="3.30.230.70:FF:000001">
    <property type="entry name" value="Polyribonucleotide nucleotidyltransferase"/>
    <property type="match status" value="1"/>
</dbReference>
<dbReference type="FunFam" id="3.30.230.70:FF:000002">
    <property type="entry name" value="Polyribonucleotide nucleotidyltransferase"/>
    <property type="match status" value="1"/>
</dbReference>
<dbReference type="Gene3D" id="3.30.230.70">
    <property type="entry name" value="GHMP Kinase, N-terminal domain"/>
    <property type="match status" value="2"/>
</dbReference>
<dbReference type="Gene3D" id="3.30.1370.10">
    <property type="entry name" value="K Homology domain, type 1"/>
    <property type="match status" value="1"/>
</dbReference>
<dbReference type="Gene3D" id="2.40.50.140">
    <property type="entry name" value="Nucleic acid-binding proteins"/>
    <property type="match status" value="1"/>
</dbReference>
<dbReference type="HAMAP" id="MF_01595">
    <property type="entry name" value="PNPase"/>
    <property type="match status" value="1"/>
</dbReference>
<dbReference type="InterPro" id="IPR001247">
    <property type="entry name" value="ExoRNase_PH_dom1"/>
</dbReference>
<dbReference type="InterPro" id="IPR015847">
    <property type="entry name" value="ExoRNase_PH_dom2"/>
</dbReference>
<dbReference type="InterPro" id="IPR036345">
    <property type="entry name" value="ExoRNase_PH_dom2_sf"/>
</dbReference>
<dbReference type="InterPro" id="IPR004087">
    <property type="entry name" value="KH_dom"/>
</dbReference>
<dbReference type="InterPro" id="IPR004088">
    <property type="entry name" value="KH_dom_type_1"/>
</dbReference>
<dbReference type="InterPro" id="IPR036612">
    <property type="entry name" value="KH_dom_type_1_sf"/>
</dbReference>
<dbReference type="InterPro" id="IPR012340">
    <property type="entry name" value="NA-bd_OB-fold"/>
</dbReference>
<dbReference type="InterPro" id="IPR012162">
    <property type="entry name" value="PNPase"/>
</dbReference>
<dbReference type="InterPro" id="IPR027408">
    <property type="entry name" value="PNPase/RNase_PH_dom_sf"/>
</dbReference>
<dbReference type="InterPro" id="IPR015848">
    <property type="entry name" value="PNPase_PH_RNA-bd_bac/org-type"/>
</dbReference>
<dbReference type="InterPro" id="IPR036456">
    <property type="entry name" value="PNPase_PH_RNA-bd_sf"/>
</dbReference>
<dbReference type="InterPro" id="IPR020568">
    <property type="entry name" value="Ribosomal_Su5_D2-typ_SF"/>
</dbReference>
<dbReference type="InterPro" id="IPR003029">
    <property type="entry name" value="S1_domain"/>
</dbReference>
<dbReference type="NCBIfam" id="TIGR03591">
    <property type="entry name" value="polynuc_phos"/>
    <property type="match status" value="1"/>
</dbReference>
<dbReference type="NCBIfam" id="NF008805">
    <property type="entry name" value="PRK11824.1"/>
    <property type="match status" value="1"/>
</dbReference>
<dbReference type="PANTHER" id="PTHR11252">
    <property type="entry name" value="POLYRIBONUCLEOTIDE NUCLEOTIDYLTRANSFERASE"/>
    <property type="match status" value="1"/>
</dbReference>
<dbReference type="PANTHER" id="PTHR11252:SF0">
    <property type="entry name" value="POLYRIBONUCLEOTIDE NUCLEOTIDYLTRANSFERASE 1, MITOCHONDRIAL"/>
    <property type="match status" value="1"/>
</dbReference>
<dbReference type="Pfam" id="PF00013">
    <property type="entry name" value="KH_1"/>
    <property type="match status" value="1"/>
</dbReference>
<dbReference type="Pfam" id="PF03726">
    <property type="entry name" value="PNPase"/>
    <property type="match status" value="1"/>
</dbReference>
<dbReference type="Pfam" id="PF01138">
    <property type="entry name" value="RNase_PH"/>
    <property type="match status" value="2"/>
</dbReference>
<dbReference type="Pfam" id="PF03725">
    <property type="entry name" value="RNase_PH_C"/>
    <property type="match status" value="2"/>
</dbReference>
<dbReference type="Pfam" id="PF00575">
    <property type="entry name" value="S1"/>
    <property type="match status" value="1"/>
</dbReference>
<dbReference type="PIRSF" id="PIRSF005499">
    <property type="entry name" value="PNPase"/>
    <property type="match status" value="1"/>
</dbReference>
<dbReference type="SMART" id="SM00322">
    <property type="entry name" value="KH"/>
    <property type="match status" value="1"/>
</dbReference>
<dbReference type="SMART" id="SM00316">
    <property type="entry name" value="S1"/>
    <property type="match status" value="1"/>
</dbReference>
<dbReference type="SUPFAM" id="SSF54791">
    <property type="entry name" value="Eukaryotic type KH-domain (KH-domain type I)"/>
    <property type="match status" value="1"/>
</dbReference>
<dbReference type="SUPFAM" id="SSF50249">
    <property type="entry name" value="Nucleic acid-binding proteins"/>
    <property type="match status" value="1"/>
</dbReference>
<dbReference type="SUPFAM" id="SSF46915">
    <property type="entry name" value="Polynucleotide phosphorylase/guanosine pentaphosphate synthase (PNPase/GPSI), domain 3"/>
    <property type="match status" value="1"/>
</dbReference>
<dbReference type="SUPFAM" id="SSF55666">
    <property type="entry name" value="Ribonuclease PH domain 2-like"/>
    <property type="match status" value="2"/>
</dbReference>
<dbReference type="SUPFAM" id="SSF54211">
    <property type="entry name" value="Ribosomal protein S5 domain 2-like"/>
    <property type="match status" value="2"/>
</dbReference>
<dbReference type="PROSITE" id="PS50084">
    <property type="entry name" value="KH_TYPE_1"/>
    <property type="match status" value="1"/>
</dbReference>
<dbReference type="PROSITE" id="PS50126">
    <property type="entry name" value="S1"/>
    <property type="match status" value="1"/>
</dbReference>
<sequence length="710" mass="76735">MFEKPVVKTFQYGNHTVTLETGVIARQATAAVMVTMDDTAVFVSVVGKKEAVEGQDFFPLTVNYQERTYAAGKIPGGFFKREGRPSEGETLTARLIDRPIRPLFPDAFKNEVQVIATVVSVNPDVQPDIPTMIGTSAALAISGIPFNGPIGAARVGHIDGQLVLNPSNTELEASKLDLVVAGTESAVLMVESEADNLTEEEMLSAVVFGHDQQQAVIKAINEFKAEVATPAWDWVAPAENTALVTKIAELAEAKLVEAYQITEKMARYDRIHEIAGEVNEVLLAEDPEANTKEIHTIFHDLEKTVVRRSIIAGNPRIDGREKDMVRALDVRTGVLPRTHGSSLFTRGETQALVTATLGTQRDAQIIDELTGERKDHFLLHYNFPPYCVGETGFVGSPKRREIGHGKLAKRGIAAVMPSVDEFPYTVRVVSEITESNGSSSMASVCGTSLALMDAGVPIKSSVAGIAMGLVKEGDDFVVLSDILGDEDHLGDMDFKVAGTNTGITALQMDIKIEGITKEIMQIALNQAQGARKHILSVMDEAISGAREDISEFAPRIHTMKISAEKIKDVIGKGGAVIRALTEETGTTIEIEDDGTIKIAATEGAAAKEAIRRIEEITAEVEVGRIYTGKVARLADFGAFVTVLPGKDGLVHISQIAEKRVEKVSDYLTEGQEVQVKVLEIDRQGRVRLSMKEAVEKPAEEANDASEAKGE</sequence>
<proteinExistence type="inferred from homology"/>